<sequence>MDDTGSNPPIAGPFQPAHPPTLDNPITEAPAPHTTPVAGKTGPDAAAQGMGGGARGSISSESSKLIDESTKLFPNVAGAASEAFRSERSASTSSTTSETGSDRPMGSASTVTEVPYGRRPSHGHGGHHGLFEGLMDQKRRNDPASVARRQSLNEQRPVPQGFIAKMWDNWVRGTTP</sequence>
<evidence type="ECO:0000256" key="1">
    <source>
        <dbReference type="SAM" id="MobiDB-lite"/>
    </source>
</evidence>
<protein>
    <recommendedName>
        <fullName>Conidiation-specific protein 8</fullName>
    </recommendedName>
</protein>
<dbReference type="EMBL" id="X07040">
    <property type="protein sequence ID" value="CAA30092.1"/>
    <property type="molecule type" value="Genomic_DNA"/>
</dbReference>
<dbReference type="EMBL" id="BX842627">
    <property type="protein sequence ID" value="CAE76281.1"/>
    <property type="molecule type" value="Genomic_DNA"/>
</dbReference>
<dbReference type="EMBL" id="CM002236">
    <property type="protein sequence ID" value="EAA34576.2"/>
    <property type="molecule type" value="Genomic_DNA"/>
</dbReference>
<dbReference type="PIR" id="S02210">
    <property type="entry name" value="S02210"/>
</dbReference>
<dbReference type="RefSeq" id="XP_963812.2">
    <property type="nucleotide sequence ID" value="XM_958719.3"/>
</dbReference>
<dbReference type="STRING" id="367110.P10169"/>
<dbReference type="PaxDb" id="5141-EFNCRP00000009046"/>
<dbReference type="EnsemblFungi" id="EAA34576">
    <property type="protein sequence ID" value="EAA34576"/>
    <property type="gene ID" value="NCU09235"/>
</dbReference>
<dbReference type="GeneID" id="23568505"/>
<dbReference type="KEGG" id="ncr:NCU09235"/>
<dbReference type="VEuPathDB" id="FungiDB:NCU09235"/>
<dbReference type="HOGENOM" id="CLU_1525588_0_0_1"/>
<dbReference type="InParanoid" id="P10169"/>
<dbReference type="OMA" id="QGFIAKM"/>
<dbReference type="OrthoDB" id="4158609at2759"/>
<dbReference type="Proteomes" id="UP000001805">
    <property type="component" value="Chromosome 1, Linkage Group I"/>
</dbReference>
<dbReference type="GO" id="GO:0048315">
    <property type="term" value="P:conidium formation"/>
    <property type="evidence" value="ECO:0007669"/>
    <property type="project" value="UniProtKB-KW"/>
</dbReference>
<dbReference type="GO" id="GO:0030435">
    <property type="term" value="P:sporulation resulting in formation of a cellular spore"/>
    <property type="evidence" value="ECO:0007669"/>
    <property type="project" value="UniProtKB-KW"/>
</dbReference>
<feature type="chain" id="PRO_0000090021" description="Conidiation-specific protein 8">
    <location>
        <begin position="1"/>
        <end position="176"/>
    </location>
</feature>
<feature type="region of interest" description="Disordered" evidence="1">
    <location>
        <begin position="1"/>
        <end position="66"/>
    </location>
</feature>
<feature type="region of interest" description="Disordered" evidence="1">
    <location>
        <begin position="79"/>
        <end position="162"/>
    </location>
</feature>
<feature type="compositionally biased region" description="Low complexity" evidence="1">
    <location>
        <begin position="79"/>
        <end position="99"/>
    </location>
</feature>
<gene>
    <name type="primary">con-8</name>
    <name type="ORF">B8J22.060</name>
    <name type="ORF">NCU09235</name>
    <name type="ORF">NCU10997</name>
</gene>
<accession>P10169</accession>
<accession>Q7SCU5</accession>
<comment type="developmental stage">
    <text>Expressed early during conidial (dormant spores) differentiation.</text>
</comment>
<keyword id="KW-0183">Conidiation</keyword>
<keyword id="KW-0221">Differentiation</keyword>
<keyword id="KW-1185">Reference proteome</keyword>
<keyword id="KW-0749">Sporulation</keyword>
<organism>
    <name type="scientific">Neurospora crassa (strain ATCC 24698 / 74-OR23-1A / CBS 708.71 / DSM 1257 / FGSC 987)</name>
    <dbReference type="NCBI Taxonomy" id="367110"/>
    <lineage>
        <taxon>Eukaryota</taxon>
        <taxon>Fungi</taxon>
        <taxon>Dikarya</taxon>
        <taxon>Ascomycota</taxon>
        <taxon>Pezizomycotina</taxon>
        <taxon>Sordariomycetes</taxon>
        <taxon>Sordariomycetidae</taxon>
        <taxon>Sordariales</taxon>
        <taxon>Sordariaceae</taxon>
        <taxon>Neurospora</taxon>
    </lineage>
</organism>
<reference key="1">
    <citation type="journal article" date="1989" name="Nucleic Acids Res.">
        <title>Genes expressed during conidiation in Neurospora crassa: characterization of con-8.</title>
        <authorList>
            <person name="Roberts A.N."/>
            <person name="Yanofsky C."/>
        </authorList>
    </citation>
    <scope>NUCLEOTIDE SEQUENCE [GENOMIC DNA]</scope>
    <source>
        <strain>ATCC 24698 / 74-OR23-1A / CBS 708.71 / DSM 1257 / FGSC 987</strain>
        <tissue>Conidium</tissue>
    </source>
</reference>
<reference key="2">
    <citation type="journal article" date="2003" name="Nucleic Acids Res.">
        <title>What's in the genome of a filamentous fungus? Analysis of the Neurospora genome sequence.</title>
        <authorList>
            <person name="Mannhaupt G."/>
            <person name="Montrone C."/>
            <person name="Haase D."/>
            <person name="Mewes H.-W."/>
            <person name="Aign V."/>
            <person name="Hoheisel J.D."/>
            <person name="Fartmann B."/>
            <person name="Nyakatura G."/>
            <person name="Kempken F."/>
            <person name="Maier J."/>
            <person name="Schulte U."/>
        </authorList>
    </citation>
    <scope>NUCLEOTIDE SEQUENCE [LARGE SCALE GENOMIC DNA]</scope>
    <source>
        <strain>ATCC 24698 / 74-OR23-1A / CBS 708.71 / DSM 1257 / FGSC 987</strain>
    </source>
</reference>
<reference key="3">
    <citation type="journal article" date="2003" name="Nature">
        <title>The genome sequence of the filamentous fungus Neurospora crassa.</title>
        <authorList>
            <person name="Galagan J.E."/>
            <person name="Calvo S.E."/>
            <person name="Borkovich K.A."/>
            <person name="Selker E.U."/>
            <person name="Read N.D."/>
            <person name="Jaffe D.B."/>
            <person name="FitzHugh W."/>
            <person name="Ma L.-J."/>
            <person name="Smirnov S."/>
            <person name="Purcell S."/>
            <person name="Rehman B."/>
            <person name="Elkins T."/>
            <person name="Engels R."/>
            <person name="Wang S."/>
            <person name="Nielsen C.B."/>
            <person name="Butler J."/>
            <person name="Endrizzi M."/>
            <person name="Qui D."/>
            <person name="Ianakiev P."/>
            <person name="Bell-Pedersen D."/>
            <person name="Nelson M.A."/>
            <person name="Werner-Washburne M."/>
            <person name="Selitrennikoff C.P."/>
            <person name="Kinsey J.A."/>
            <person name="Braun E.L."/>
            <person name="Zelter A."/>
            <person name="Schulte U."/>
            <person name="Kothe G.O."/>
            <person name="Jedd G."/>
            <person name="Mewes H.-W."/>
            <person name="Staben C."/>
            <person name="Marcotte E."/>
            <person name="Greenberg D."/>
            <person name="Roy A."/>
            <person name="Foley K."/>
            <person name="Naylor J."/>
            <person name="Stange-Thomann N."/>
            <person name="Barrett R."/>
            <person name="Gnerre S."/>
            <person name="Kamal M."/>
            <person name="Kamvysselis M."/>
            <person name="Mauceli E.W."/>
            <person name="Bielke C."/>
            <person name="Rudd S."/>
            <person name="Frishman D."/>
            <person name="Krystofova S."/>
            <person name="Rasmussen C."/>
            <person name="Metzenberg R.L."/>
            <person name="Perkins D.D."/>
            <person name="Kroken S."/>
            <person name="Cogoni C."/>
            <person name="Macino G."/>
            <person name="Catcheside D.E.A."/>
            <person name="Li W."/>
            <person name="Pratt R.J."/>
            <person name="Osmani S.A."/>
            <person name="DeSouza C.P.C."/>
            <person name="Glass N.L."/>
            <person name="Orbach M.J."/>
            <person name="Berglund J.A."/>
            <person name="Voelker R."/>
            <person name="Yarden O."/>
            <person name="Plamann M."/>
            <person name="Seiler S."/>
            <person name="Dunlap J.C."/>
            <person name="Radford A."/>
            <person name="Aramayo R."/>
            <person name="Natvig D.O."/>
            <person name="Alex L.A."/>
            <person name="Mannhaupt G."/>
            <person name="Ebbole D.J."/>
            <person name="Freitag M."/>
            <person name="Paulsen I."/>
            <person name="Sachs M.S."/>
            <person name="Lander E.S."/>
            <person name="Nusbaum C."/>
            <person name="Birren B.W."/>
        </authorList>
    </citation>
    <scope>NUCLEOTIDE SEQUENCE [LARGE SCALE GENOMIC DNA]</scope>
    <source>
        <strain>ATCC 24698 / 74-OR23-1A / CBS 708.71 / DSM 1257 / FGSC 987</strain>
    </source>
</reference>
<proteinExistence type="evidence at transcript level"/>
<name>CON8_NEUCR</name>